<proteinExistence type="inferred from homology"/>
<gene>
    <name type="ordered locus">BAA_3767</name>
</gene>
<accession>C3P4P7</accession>
<organism>
    <name type="scientific">Bacillus anthracis (strain A0248)</name>
    <dbReference type="NCBI Taxonomy" id="592021"/>
    <lineage>
        <taxon>Bacteria</taxon>
        <taxon>Bacillati</taxon>
        <taxon>Bacillota</taxon>
        <taxon>Bacilli</taxon>
        <taxon>Bacillales</taxon>
        <taxon>Bacillaceae</taxon>
        <taxon>Bacillus</taxon>
        <taxon>Bacillus cereus group</taxon>
    </lineage>
</organism>
<name>Y3767_BACAA</name>
<evidence type="ECO:0000255" key="1">
    <source>
        <dbReference type="HAMAP-Rule" id="MF_00363"/>
    </source>
</evidence>
<dbReference type="EMBL" id="CP001598">
    <property type="protein sequence ID" value="ACQ50764.1"/>
    <property type="molecule type" value="Genomic_DNA"/>
</dbReference>
<dbReference type="RefSeq" id="WP_001123317.1">
    <property type="nucleotide sequence ID" value="NC_012659.1"/>
</dbReference>
<dbReference type="SMR" id="C3P4P7"/>
<dbReference type="KEGG" id="bai:BAA_3767"/>
<dbReference type="HOGENOM" id="CLU_180108_0_1_9"/>
<dbReference type="GO" id="GO:0005886">
    <property type="term" value="C:plasma membrane"/>
    <property type="evidence" value="ECO:0007669"/>
    <property type="project" value="UniProtKB-SubCell"/>
</dbReference>
<dbReference type="HAMAP" id="MF_00363">
    <property type="entry name" value="UPF0154"/>
    <property type="match status" value="1"/>
</dbReference>
<dbReference type="InterPro" id="IPR005359">
    <property type="entry name" value="UPF0154"/>
</dbReference>
<dbReference type="NCBIfam" id="NF002503">
    <property type="entry name" value="PRK01844.1"/>
    <property type="match status" value="1"/>
</dbReference>
<dbReference type="Pfam" id="PF03672">
    <property type="entry name" value="UPF0154"/>
    <property type="match status" value="1"/>
</dbReference>
<protein>
    <recommendedName>
        <fullName evidence="1">UPF0154 protein BAA_3767</fullName>
    </recommendedName>
</protein>
<feature type="chain" id="PRO_1000197723" description="UPF0154 protein BAA_3767">
    <location>
        <begin position="1"/>
        <end position="73"/>
    </location>
</feature>
<feature type="transmembrane region" description="Helical" evidence="1">
    <location>
        <begin position="3"/>
        <end position="23"/>
    </location>
</feature>
<reference key="1">
    <citation type="submission" date="2009-04" db="EMBL/GenBank/DDBJ databases">
        <title>Genome sequence of Bacillus anthracis A0248.</title>
        <authorList>
            <person name="Dodson R.J."/>
            <person name="Munk A.C."/>
            <person name="Bruce D."/>
            <person name="Detter C."/>
            <person name="Tapia R."/>
            <person name="Sutton G."/>
            <person name="Sims D."/>
            <person name="Brettin T."/>
        </authorList>
    </citation>
    <scope>NUCLEOTIDE SEQUENCE [LARGE SCALE GENOMIC DNA]</scope>
    <source>
        <strain>A0248</strain>
    </source>
</reference>
<keyword id="KW-1003">Cell membrane</keyword>
<keyword id="KW-0472">Membrane</keyword>
<keyword id="KW-0812">Transmembrane</keyword>
<keyword id="KW-1133">Transmembrane helix</keyword>
<comment type="subcellular location">
    <subcellularLocation>
        <location evidence="1">Cell membrane</location>
        <topology evidence="1">Single-pass membrane protein</topology>
    </subcellularLocation>
</comment>
<comment type="similarity">
    <text evidence="1">Belongs to the UPF0154 family.</text>
</comment>
<sequence length="73" mass="8380">MPIWLGILVGVVALVAGVALGFFIARKYMMNYLQKNPPINEQMLKMMMMQMGQKPSQKKINQMMSAMNKQQMK</sequence>